<evidence type="ECO:0000255" key="1">
    <source>
        <dbReference type="HAMAP-Rule" id="MF_00146"/>
    </source>
</evidence>
<organism>
    <name type="scientific">Escherichia coli (strain K12 / DH10B)</name>
    <dbReference type="NCBI Taxonomy" id="316385"/>
    <lineage>
        <taxon>Bacteria</taxon>
        <taxon>Pseudomonadati</taxon>
        <taxon>Pseudomonadota</taxon>
        <taxon>Gammaproteobacteria</taxon>
        <taxon>Enterobacterales</taxon>
        <taxon>Enterobacteriaceae</taxon>
        <taxon>Escherichia</taxon>
    </lineage>
</organism>
<name>DCD_ECODH</name>
<comment type="function">
    <text evidence="1">Catalyzes the deamination of dCTP to dUTP.</text>
</comment>
<comment type="catalytic activity">
    <reaction evidence="1">
        <text>dCTP + H2O + H(+) = dUTP + NH4(+)</text>
        <dbReference type="Rhea" id="RHEA:22680"/>
        <dbReference type="ChEBI" id="CHEBI:15377"/>
        <dbReference type="ChEBI" id="CHEBI:15378"/>
        <dbReference type="ChEBI" id="CHEBI:28938"/>
        <dbReference type="ChEBI" id="CHEBI:61481"/>
        <dbReference type="ChEBI" id="CHEBI:61555"/>
        <dbReference type="EC" id="3.5.4.13"/>
    </reaction>
</comment>
<comment type="pathway">
    <text evidence="1">Pyrimidine metabolism; dUMP biosynthesis; dUMP from dCTP (dUTP route): step 1/2.</text>
</comment>
<comment type="subunit">
    <text evidence="1">Homotrimer.</text>
</comment>
<comment type="similarity">
    <text evidence="1">Belongs to the dCTP deaminase family.</text>
</comment>
<protein>
    <recommendedName>
        <fullName evidence="1">dCTP deaminase</fullName>
        <ecNumber evidence="1">3.5.4.13</ecNumber>
    </recommendedName>
    <alternativeName>
        <fullName evidence="1">Deoxycytidine triphosphate deaminase</fullName>
    </alternativeName>
</protein>
<accession>B1X701</accession>
<dbReference type="EC" id="3.5.4.13" evidence="1"/>
<dbReference type="EMBL" id="CP000948">
    <property type="protein sequence ID" value="ACB03237.1"/>
    <property type="molecule type" value="Genomic_DNA"/>
</dbReference>
<dbReference type="RefSeq" id="WP_001234768.1">
    <property type="nucleotide sequence ID" value="NC_010473.1"/>
</dbReference>
<dbReference type="SMR" id="B1X701"/>
<dbReference type="KEGG" id="ecd:ECDH10B_2215"/>
<dbReference type="HOGENOM" id="CLU_087476_2_0_6"/>
<dbReference type="UniPathway" id="UPA00610">
    <property type="reaction ID" value="UER00665"/>
</dbReference>
<dbReference type="GO" id="GO:0008829">
    <property type="term" value="F:dCTP deaminase activity"/>
    <property type="evidence" value="ECO:0007669"/>
    <property type="project" value="UniProtKB-UniRule"/>
</dbReference>
<dbReference type="GO" id="GO:0000166">
    <property type="term" value="F:nucleotide binding"/>
    <property type="evidence" value="ECO:0007669"/>
    <property type="project" value="UniProtKB-KW"/>
</dbReference>
<dbReference type="GO" id="GO:0006226">
    <property type="term" value="P:dUMP biosynthetic process"/>
    <property type="evidence" value="ECO:0007669"/>
    <property type="project" value="UniProtKB-UniPathway"/>
</dbReference>
<dbReference type="GO" id="GO:0006229">
    <property type="term" value="P:dUTP biosynthetic process"/>
    <property type="evidence" value="ECO:0007669"/>
    <property type="project" value="UniProtKB-UniRule"/>
</dbReference>
<dbReference type="GO" id="GO:0015949">
    <property type="term" value="P:nucleobase-containing small molecule interconversion"/>
    <property type="evidence" value="ECO:0007669"/>
    <property type="project" value="TreeGrafter"/>
</dbReference>
<dbReference type="CDD" id="cd07557">
    <property type="entry name" value="trimeric_dUTPase"/>
    <property type="match status" value="1"/>
</dbReference>
<dbReference type="FunFam" id="2.70.40.10:FF:000003">
    <property type="entry name" value="dCTP deaminase"/>
    <property type="match status" value="1"/>
</dbReference>
<dbReference type="Gene3D" id="2.70.40.10">
    <property type="match status" value="1"/>
</dbReference>
<dbReference type="HAMAP" id="MF_00146">
    <property type="entry name" value="dCTP_deaminase"/>
    <property type="match status" value="1"/>
</dbReference>
<dbReference type="InterPro" id="IPR011962">
    <property type="entry name" value="dCTP_deaminase"/>
</dbReference>
<dbReference type="InterPro" id="IPR036157">
    <property type="entry name" value="dUTPase-like_sf"/>
</dbReference>
<dbReference type="InterPro" id="IPR033704">
    <property type="entry name" value="dUTPase_trimeric"/>
</dbReference>
<dbReference type="NCBIfam" id="TIGR02274">
    <property type="entry name" value="dCTP_deam"/>
    <property type="match status" value="1"/>
</dbReference>
<dbReference type="PANTHER" id="PTHR42680">
    <property type="entry name" value="DCTP DEAMINASE"/>
    <property type="match status" value="1"/>
</dbReference>
<dbReference type="PANTHER" id="PTHR42680:SF3">
    <property type="entry name" value="DCTP DEAMINASE"/>
    <property type="match status" value="1"/>
</dbReference>
<dbReference type="Pfam" id="PF22769">
    <property type="entry name" value="DCD"/>
    <property type="match status" value="1"/>
</dbReference>
<dbReference type="SUPFAM" id="SSF51283">
    <property type="entry name" value="dUTPase-like"/>
    <property type="match status" value="1"/>
</dbReference>
<sequence length="193" mass="21249">MRLCDRDIEAWLDEGRLSINPRPPVERINGATVDVRLGNKFRTFRGHTAAFIDLSGPKDEVSAALDRVMSDEIVLDEGEAFYLHPGELALAVTLESVTLPADLVGWLDGRSSLARLGLMVHVTAHRIDPGWSGCIVLEFYNSGKLPLALRPGMLIGALSFEPLSGPAVRPYNRREDAKYRNQQGAVASRIDKD</sequence>
<feature type="chain" id="PRO_1000096423" description="dCTP deaminase">
    <location>
        <begin position="1"/>
        <end position="193"/>
    </location>
</feature>
<feature type="active site" description="Proton donor/acceptor" evidence="1">
    <location>
        <position position="138"/>
    </location>
</feature>
<feature type="binding site" evidence="1">
    <location>
        <begin position="110"/>
        <end position="115"/>
    </location>
    <ligand>
        <name>dCTP</name>
        <dbReference type="ChEBI" id="CHEBI:61481"/>
    </ligand>
</feature>
<feature type="binding site" evidence="1">
    <location>
        <position position="128"/>
    </location>
    <ligand>
        <name>dCTP</name>
        <dbReference type="ChEBI" id="CHEBI:61481"/>
    </ligand>
</feature>
<feature type="binding site" evidence="1">
    <location>
        <begin position="136"/>
        <end position="138"/>
    </location>
    <ligand>
        <name>dCTP</name>
        <dbReference type="ChEBI" id="CHEBI:61481"/>
    </ligand>
</feature>
<feature type="binding site" evidence="1">
    <location>
        <position position="171"/>
    </location>
    <ligand>
        <name>dCTP</name>
        <dbReference type="ChEBI" id="CHEBI:61481"/>
    </ligand>
</feature>
<feature type="binding site" evidence="1">
    <location>
        <position position="178"/>
    </location>
    <ligand>
        <name>dCTP</name>
        <dbReference type="ChEBI" id="CHEBI:61481"/>
    </ligand>
</feature>
<feature type="binding site" evidence="1">
    <location>
        <position position="182"/>
    </location>
    <ligand>
        <name>dCTP</name>
        <dbReference type="ChEBI" id="CHEBI:61481"/>
    </ligand>
</feature>
<proteinExistence type="inferred from homology"/>
<keyword id="KW-0378">Hydrolase</keyword>
<keyword id="KW-0546">Nucleotide metabolism</keyword>
<keyword id="KW-0547">Nucleotide-binding</keyword>
<reference key="1">
    <citation type="journal article" date="2008" name="J. Bacteriol.">
        <title>The complete genome sequence of Escherichia coli DH10B: insights into the biology of a laboratory workhorse.</title>
        <authorList>
            <person name="Durfee T."/>
            <person name="Nelson R."/>
            <person name="Baldwin S."/>
            <person name="Plunkett G. III"/>
            <person name="Burland V."/>
            <person name="Mau B."/>
            <person name="Petrosino J.F."/>
            <person name="Qin X."/>
            <person name="Muzny D.M."/>
            <person name="Ayele M."/>
            <person name="Gibbs R.A."/>
            <person name="Csorgo B."/>
            <person name="Posfai G."/>
            <person name="Weinstock G.M."/>
            <person name="Blattner F.R."/>
        </authorList>
    </citation>
    <scope>NUCLEOTIDE SEQUENCE [LARGE SCALE GENOMIC DNA]</scope>
    <source>
        <strain>K12 / DH10B</strain>
    </source>
</reference>
<gene>
    <name evidence="1" type="primary">dcd</name>
    <name type="ordered locus">ECDH10B_2215</name>
</gene>